<organism>
    <name type="scientific">Parabacteroides distasonis (strain ATCC 8503 / DSM 20701 / CIP 104284 / JCM 5825 / NCTC 11152)</name>
    <dbReference type="NCBI Taxonomy" id="435591"/>
    <lineage>
        <taxon>Bacteria</taxon>
        <taxon>Pseudomonadati</taxon>
        <taxon>Bacteroidota</taxon>
        <taxon>Bacteroidia</taxon>
        <taxon>Bacteroidales</taxon>
        <taxon>Tannerellaceae</taxon>
        <taxon>Parabacteroides</taxon>
    </lineage>
</organism>
<name>SYD_PARD8</name>
<reference key="1">
    <citation type="journal article" date="2007" name="PLoS Biol.">
        <title>Evolution of symbiotic bacteria in the distal human intestine.</title>
        <authorList>
            <person name="Xu J."/>
            <person name="Mahowald M.A."/>
            <person name="Ley R.E."/>
            <person name="Lozupone C.A."/>
            <person name="Hamady M."/>
            <person name="Martens E.C."/>
            <person name="Henrissat B."/>
            <person name="Coutinho P.M."/>
            <person name="Minx P."/>
            <person name="Latreille P."/>
            <person name="Cordum H."/>
            <person name="Van Brunt A."/>
            <person name="Kim K."/>
            <person name="Fulton R.S."/>
            <person name="Fulton L.A."/>
            <person name="Clifton S.W."/>
            <person name="Wilson R.K."/>
            <person name="Knight R.D."/>
            <person name="Gordon J.I."/>
        </authorList>
    </citation>
    <scope>NUCLEOTIDE SEQUENCE [LARGE SCALE GENOMIC DNA]</scope>
    <source>
        <strain>ATCC 8503 / DSM 20701 / CIP 104284 / JCM 5825 / NCTC 11152</strain>
    </source>
</reference>
<evidence type="ECO:0000255" key="1">
    <source>
        <dbReference type="HAMAP-Rule" id="MF_00044"/>
    </source>
</evidence>
<keyword id="KW-0030">Aminoacyl-tRNA synthetase</keyword>
<keyword id="KW-0067">ATP-binding</keyword>
<keyword id="KW-0963">Cytoplasm</keyword>
<keyword id="KW-0436">Ligase</keyword>
<keyword id="KW-0547">Nucleotide-binding</keyword>
<keyword id="KW-0648">Protein biosynthesis</keyword>
<keyword id="KW-1185">Reference proteome</keyword>
<comment type="function">
    <text evidence="1">Catalyzes the attachment of L-aspartate to tRNA(Asp) in a two-step reaction: L-aspartate is first activated by ATP to form Asp-AMP and then transferred to the acceptor end of tRNA(Asp).</text>
</comment>
<comment type="catalytic activity">
    <reaction evidence="1">
        <text>tRNA(Asp) + L-aspartate + ATP = L-aspartyl-tRNA(Asp) + AMP + diphosphate</text>
        <dbReference type="Rhea" id="RHEA:19649"/>
        <dbReference type="Rhea" id="RHEA-COMP:9660"/>
        <dbReference type="Rhea" id="RHEA-COMP:9678"/>
        <dbReference type="ChEBI" id="CHEBI:29991"/>
        <dbReference type="ChEBI" id="CHEBI:30616"/>
        <dbReference type="ChEBI" id="CHEBI:33019"/>
        <dbReference type="ChEBI" id="CHEBI:78442"/>
        <dbReference type="ChEBI" id="CHEBI:78516"/>
        <dbReference type="ChEBI" id="CHEBI:456215"/>
        <dbReference type="EC" id="6.1.1.12"/>
    </reaction>
</comment>
<comment type="subunit">
    <text evidence="1">Homodimer.</text>
</comment>
<comment type="subcellular location">
    <subcellularLocation>
        <location evidence="1">Cytoplasm</location>
    </subcellularLocation>
</comment>
<comment type="similarity">
    <text evidence="1">Belongs to the class-II aminoacyl-tRNA synthetase family. Type 1 subfamily.</text>
</comment>
<dbReference type="EC" id="6.1.1.12" evidence="1"/>
<dbReference type="EMBL" id="CP000140">
    <property type="protein sequence ID" value="ABR43160.1"/>
    <property type="molecule type" value="Genomic_DNA"/>
</dbReference>
<dbReference type="RefSeq" id="WP_005856298.1">
    <property type="nucleotide sequence ID" value="NZ_LR215978.1"/>
</dbReference>
<dbReference type="SMR" id="A6LBU6"/>
<dbReference type="STRING" id="435591.BDI_1402"/>
<dbReference type="PaxDb" id="435591-BDI_1402"/>
<dbReference type="GeneID" id="93525300"/>
<dbReference type="KEGG" id="pdi:BDI_1402"/>
<dbReference type="eggNOG" id="COG0173">
    <property type="taxonomic scope" value="Bacteria"/>
</dbReference>
<dbReference type="HOGENOM" id="CLU_014330_3_2_10"/>
<dbReference type="BioCyc" id="PDIS435591:G1G5A-1442-MONOMER"/>
<dbReference type="Proteomes" id="UP000000566">
    <property type="component" value="Chromosome"/>
</dbReference>
<dbReference type="GO" id="GO:0005737">
    <property type="term" value="C:cytoplasm"/>
    <property type="evidence" value="ECO:0007669"/>
    <property type="project" value="UniProtKB-SubCell"/>
</dbReference>
<dbReference type="GO" id="GO:0004815">
    <property type="term" value="F:aspartate-tRNA ligase activity"/>
    <property type="evidence" value="ECO:0007669"/>
    <property type="project" value="UniProtKB-UniRule"/>
</dbReference>
<dbReference type="GO" id="GO:0005524">
    <property type="term" value="F:ATP binding"/>
    <property type="evidence" value="ECO:0007669"/>
    <property type="project" value="UniProtKB-UniRule"/>
</dbReference>
<dbReference type="GO" id="GO:0003676">
    <property type="term" value="F:nucleic acid binding"/>
    <property type="evidence" value="ECO:0007669"/>
    <property type="project" value="InterPro"/>
</dbReference>
<dbReference type="GO" id="GO:0006422">
    <property type="term" value="P:aspartyl-tRNA aminoacylation"/>
    <property type="evidence" value="ECO:0007669"/>
    <property type="project" value="UniProtKB-UniRule"/>
</dbReference>
<dbReference type="CDD" id="cd00777">
    <property type="entry name" value="AspRS_core"/>
    <property type="match status" value="1"/>
</dbReference>
<dbReference type="CDD" id="cd04317">
    <property type="entry name" value="EcAspRS_like_N"/>
    <property type="match status" value="1"/>
</dbReference>
<dbReference type="Gene3D" id="3.30.930.10">
    <property type="entry name" value="Bira Bifunctional Protein, Domain 2"/>
    <property type="match status" value="1"/>
</dbReference>
<dbReference type="Gene3D" id="3.30.1360.30">
    <property type="entry name" value="GAD-like domain"/>
    <property type="match status" value="1"/>
</dbReference>
<dbReference type="Gene3D" id="2.40.50.140">
    <property type="entry name" value="Nucleic acid-binding proteins"/>
    <property type="match status" value="1"/>
</dbReference>
<dbReference type="HAMAP" id="MF_00044">
    <property type="entry name" value="Asp_tRNA_synth_type1"/>
    <property type="match status" value="1"/>
</dbReference>
<dbReference type="InterPro" id="IPR004364">
    <property type="entry name" value="Aa-tRNA-synt_II"/>
</dbReference>
<dbReference type="InterPro" id="IPR006195">
    <property type="entry name" value="aa-tRNA-synth_II"/>
</dbReference>
<dbReference type="InterPro" id="IPR045864">
    <property type="entry name" value="aa-tRNA-synth_II/BPL/LPL"/>
</dbReference>
<dbReference type="InterPro" id="IPR004524">
    <property type="entry name" value="Asp-tRNA-ligase_1"/>
</dbReference>
<dbReference type="InterPro" id="IPR047089">
    <property type="entry name" value="Asp-tRNA-ligase_1_N"/>
</dbReference>
<dbReference type="InterPro" id="IPR002312">
    <property type="entry name" value="Asp/Asn-tRNA-synth_IIb"/>
</dbReference>
<dbReference type="InterPro" id="IPR047090">
    <property type="entry name" value="AspRS_core"/>
</dbReference>
<dbReference type="InterPro" id="IPR004115">
    <property type="entry name" value="GAD-like_sf"/>
</dbReference>
<dbReference type="InterPro" id="IPR029351">
    <property type="entry name" value="GAD_dom"/>
</dbReference>
<dbReference type="InterPro" id="IPR012340">
    <property type="entry name" value="NA-bd_OB-fold"/>
</dbReference>
<dbReference type="InterPro" id="IPR004365">
    <property type="entry name" value="NA-bd_OB_tRNA"/>
</dbReference>
<dbReference type="NCBIfam" id="TIGR00459">
    <property type="entry name" value="aspS_bact"/>
    <property type="match status" value="1"/>
</dbReference>
<dbReference type="NCBIfam" id="NF001750">
    <property type="entry name" value="PRK00476.1"/>
    <property type="match status" value="1"/>
</dbReference>
<dbReference type="PANTHER" id="PTHR22594:SF5">
    <property type="entry name" value="ASPARTATE--TRNA LIGASE, MITOCHONDRIAL"/>
    <property type="match status" value="1"/>
</dbReference>
<dbReference type="PANTHER" id="PTHR22594">
    <property type="entry name" value="ASPARTYL/LYSYL-TRNA SYNTHETASE"/>
    <property type="match status" value="1"/>
</dbReference>
<dbReference type="Pfam" id="PF02938">
    <property type="entry name" value="GAD"/>
    <property type="match status" value="1"/>
</dbReference>
<dbReference type="Pfam" id="PF00152">
    <property type="entry name" value="tRNA-synt_2"/>
    <property type="match status" value="1"/>
</dbReference>
<dbReference type="Pfam" id="PF01336">
    <property type="entry name" value="tRNA_anti-codon"/>
    <property type="match status" value="1"/>
</dbReference>
<dbReference type="PRINTS" id="PR01042">
    <property type="entry name" value="TRNASYNTHASP"/>
</dbReference>
<dbReference type="SUPFAM" id="SSF55681">
    <property type="entry name" value="Class II aaRS and biotin synthetases"/>
    <property type="match status" value="1"/>
</dbReference>
<dbReference type="SUPFAM" id="SSF55261">
    <property type="entry name" value="GAD domain-like"/>
    <property type="match status" value="1"/>
</dbReference>
<dbReference type="SUPFAM" id="SSF50249">
    <property type="entry name" value="Nucleic acid-binding proteins"/>
    <property type="match status" value="1"/>
</dbReference>
<dbReference type="PROSITE" id="PS50862">
    <property type="entry name" value="AA_TRNA_LIGASE_II"/>
    <property type="match status" value="1"/>
</dbReference>
<accession>A6LBU6</accession>
<proteinExistence type="inferred from homology"/>
<feature type="chain" id="PRO_1000006720" description="Aspartate--tRNA ligase">
    <location>
        <begin position="1"/>
        <end position="585"/>
    </location>
</feature>
<feature type="region of interest" description="Aspartate" evidence="1">
    <location>
        <begin position="197"/>
        <end position="200"/>
    </location>
</feature>
<feature type="binding site" evidence="1">
    <location>
        <position position="173"/>
    </location>
    <ligand>
        <name>L-aspartate</name>
        <dbReference type="ChEBI" id="CHEBI:29991"/>
    </ligand>
</feature>
<feature type="binding site" evidence="1">
    <location>
        <begin position="219"/>
        <end position="221"/>
    </location>
    <ligand>
        <name>ATP</name>
        <dbReference type="ChEBI" id="CHEBI:30616"/>
    </ligand>
</feature>
<feature type="binding site" evidence="1">
    <location>
        <position position="219"/>
    </location>
    <ligand>
        <name>L-aspartate</name>
        <dbReference type="ChEBI" id="CHEBI:29991"/>
    </ligand>
</feature>
<feature type="binding site" evidence="1">
    <location>
        <position position="228"/>
    </location>
    <ligand>
        <name>ATP</name>
        <dbReference type="ChEBI" id="CHEBI:30616"/>
    </ligand>
</feature>
<feature type="binding site" evidence="1">
    <location>
        <position position="446"/>
    </location>
    <ligand>
        <name>L-aspartate</name>
        <dbReference type="ChEBI" id="CHEBI:29991"/>
    </ligand>
</feature>
<feature type="binding site" evidence="1">
    <location>
        <position position="480"/>
    </location>
    <ligand>
        <name>ATP</name>
        <dbReference type="ChEBI" id="CHEBI:30616"/>
    </ligand>
</feature>
<feature type="binding site" evidence="1">
    <location>
        <position position="487"/>
    </location>
    <ligand>
        <name>L-aspartate</name>
        <dbReference type="ChEBI" id="CHEBI:29991"/>
    </ligand>
</feature>
<feature type="binding site" evidence="1">
    <location>
        <begin position="532"/>
        <end position="535"/>
    </location>
    <ligand>
        <name>ATP</name>
        <dbReference type="ChEBI" id="CHEBI:30616"/>
    </ligand>
</feature>
<sequence>MYRTRTCGDLRLADEGLVVTLAGWVQKTRKMGGMTFVDIRDRYGITQLVFNQEVDAALCEKANKLGREFVIQVTGTVRERSSKNAHIPTGDIELIVSELNVLNTALTPPFTIEEETDGGDDLRMKYRYLDLRRACVRKNLELRHRMAFEVRRYLDEQGFLEVETPVLVNSTPEGARDFVVPSRMNPGQFYALPQSPQTLKQLLMVSGFDRYFQIVKCFRDEDLRADRQPEFTQIDCEMSFVEQEDVLNMFEGMAKHLFKVIRGVEFKESFMRMTWQDAMKQYGSDKPDLRFGMKFVELMDIMKGHGFSVFDNAAYIGGICAEGAASYTRKQLDALTEFVKRPQVGAKGLVYARVEADGNVKSSVDKFYSQEVLQEMKNAFGAKPGDLILILSGDDAMKTRKQLCELRLEMGNQLGLRDKDKFVCLWVIDFPLFEWNEDDQRFYAMHHPFTSPNPDDIPLLDTDPGAVRANAYDMVINGVEVGGGSIRIHDSQLQDKMFKLLGFTEERAQEQFGFLMNAFKYGAPPHGGLAYGLDRFVSLFAGLDSIRDCIAFPKNNSGRDVMLDAPGVLDPAQLDELNLIVDIKK</sequence>
<protein>
    <recommendedName>
        <fullName evidence="1">Aspartate--tRNA ligase</fullName>
        <ecNumber evidence="1">6.1.1.12</ecNumber>
    </recommendedName>
    <alternativeName>
        <fullName evidence="1">Aspartyl-tRNA synthetase</fullName>
        <shortName evidence="1">AspRS</shortName>
    </alternativeName>
</protein>
<gene>
    <name evidence="1" type="primary">aspS</name>
    <name type="ordered locus">BDI_1402</name>
</gene>